<feature type="signal peptide" evidence="3">
    <location>
        <begin position="1"/>
        <end position="20"/>
    </location>
</feature>
<feature type="chain" id="PRO_0000223698" description="Lysosome-associated membrane glycoprotein 3">
    <location>
        <begin position="21"/>
        <end position="408"/>
    </location>
</feature>
<feature type="topological domain" description="Lumenal" evidence="3">
    <location>
        <begin position="21"/>
        <end position="373"/>
    </location>
</feature>
<feature type="transmembrane region" description="Helical" evidence="4">
    <location>
        <begin position="374"/>
        <end position="394"/>
    </location>
</feature>
<feature type="topological domain" description="Cytoplasmic" evidence="4">
    <location>
        <begin position="395"/>
        <end position="408"/>
    </location>
</feature>
<feature type="glycosylation site" description="N-linked (GlcNAc...) asparagine" evidence="3">
    <location>
        <position position="55"/>
    </location>
</feature>
<feature type="glycosylation site" description="N-linked (GlcNAc...) asparagine" evidence="3">
    <location>
        <position position="225"/>
    </location>
</feature>
<feature type="glycosylation site" description="N-linked (GlcNAc...) asparagine" evidence="3">
    <location>
        <position position="284"/>
    </location>
</feature>
<feature type="disulfide bond" evidence="4">
    <location>
        <begin position="230"/>
        <end position="267"/>
    </location>
</feature>
<feature type="disulfide bond" evidence="4">
    <location>
        <begin position="331"/>
        <end position="368"/>
    </location>
</feature>
<gene>
    <name type="primary">Lamp3</name>
</gene>
<evidence type="ECO:0000250" key="1"/>
<evidence type="ECO:0000250" key="2">
    <source>
        <dbReference type="UniProtKB" id="Q9UQV4"/>
    </source>
</evidence>
<evidence type="ECO:0000255" key="3"/>
<evidence type="ECO:0000255" key="4">
    <source>
        <dbReference type="PROSITE-ProRule" id="PRU00740"/>
    </source>
</evidence>
<sequence>MPGQTSAVAVLLCLAVILHGYQIREKEFPEARGYLQYTATTTEQITAKPPLPLTNQTSHATLASRSKDDYIQTAAETSTFEDTAHITMKTAIPVTTKSLLPISSTSYTFVRTNNSHMTASSTEDTIGSGSITHLPFPTTRASLAAVNHITGRSTQLGGQTTLPKALFTPSHESTTTQRPTLSTIVSELTPTGKDRSTTSSVPLVPRPTFVTWSSPAKIGTYEVLNGSRLCIKAEMGIALIVQEKGLDSATQRHFNIDPSLTHASGKCGSQNSNLFLNFQGGSVNVTFTKEENLYYVSEVGAYLTISNTEKTYQGKSTMMMFETVVGHSFKCVSEQSIQLSAQLQMKTMNIHLQAFDFEGDSFGIVDECLSDYTVVLPVVGIIVVVLCVVGLGIYKIRQRRQSSAYQRI</sequence>
<dbReference type="EMBL" id="BC083787">
    <property type="protein sequence ID" value="AAH83787.1"/>
    <property type="molecule type" value="mRNA"/>
</dbReference>
<dbReference type="RefSeq" id="NP_001012015.1">
    <property type="nucleotide sequence ID" value="NM_001012015.1"/>
</dbReference>
<dbReference type="RefSeq" id="XP_017453457.1">
    <property type="nucleotide sequence ID" value="XM_017597968.1"/>
</dbReference>
<dbReference type="RefSeq" id="XP_038944199.1">
    <property type="nucleotide sequence ID" value="XM_039088271.2"/>
</dbReference>
<dbReference type="RefSeq" id="XP_038944200.1">
    <property type="nucleotide sequence ID" value="XM_039088272.2"/>
</dbReference>
<dbReference type="RefSeq" id="XP_038944201.1">
    <property type="nucleotide sequence ID" value="XM_039088273.2"/>
</dbReference>
<dbReference type="RefSeq" id="XP_063126532.1">
    <property type="nucleotide sequence ID" value="XM_063270462.1"/>
</dbReference>
<dbReference type="RefSeq" id="XP_063126533.1">
    <property type="nucleotide sequence ID" value="XM_063270463.1"/>
</dbReference>
<dbReference type="RefSeq" id="XP_063126534.1">
    <property type="nucleotide sequence ID" value="XM_063270464.1"/>
</dbReference>
<dbReference type="RefSeq" id="XP_063126535.1">
    <property type="nucleotide sequence ID" value="XM_063270465.1"/>
</dbReference>
<dbReference type="RefSeq" id="XP_063126536.1">
    <property type="nucleotide sequence ID" value="XM_063270466.1"/>
</dbReference>
<dbReference type="RefSeq" id="XP_063126537.1">
    <property type="nucleotide sequence ID" value="XM_063270467.1"/>
</dbReference>
<dbReference type="RefSeq" id="XP_063126538.1">
    <property type="nucleotide sequence ID" value="XM_063270468.1"/>
</dbReference>
<dbReference type="SMR" id="Q5XI99"/>
<dbReference type="FunCoup" id="Q5XI99">
    <property type="interactions" value="176"/>
</dbReference>
<dbReference type="STRING" id="10116.ENSRNOP00000038456"/>
<dbReference type="GlyCosmos" id="Q5XI99">
    <property type="glycosylation" value="3 sites, No reported glycans"/>
</dbReference>
<dbReference type="GlyGen" id="Q5XI99">
    <property type="glycosylation" value="3 sites"/>
</dbReference>
<dbReference type="PhosphoSitePlus" id="Q5XI99"/>
<dbReference type="PaxDb" id="10116-ENSRNOP00000038456"/>
<dbReference type="Ensembl" id="ENSRNOT00000034498.6">
    <property type="protein sequence ID" value="ENSRNOP00000038456.3"/>
    <property type="gene ID" value="ENSRNOG00000022792.7"/>
</dbReference>
<dbReference type="GeneID" id="303801"/>
<dbReference type="KEGG" id="rno:303801"/>
<dbReference type="AGR" id="RGD:1307928"/>
<dbReference type="CTD" id="27074"/>
<dbReference type="RGD" id="1307928">
    <property type="gene designation" value="Lamp3"/>
</dbReference>
<dbReference type="eggNOG" id="KOG4818">
    <property type="taxonomic scope" value="Eukaryota"/>
</dbReference>
<dbReference type="GeneTree" id="ENSGT00950000182899"/>
<dbReference type="HOGENOM" id="CLU_057804_0_0_1"/>
<dbReference type="InParanoid" id="Q5XI99"/>
<dbReference type="OMA" id="QLLFVNM"/>
<dbReference type="PhylomeDB" id="Q5XI99"/>
<dbReference type="TreeFam" id="TF316339"/>
<dbReference type="PRO" id="PR:Q5XI99"/>
<dbReference type="Proteomes" id="UP000002494">
    <property type="component" value="Chromosome 11"/>
</dbReference>
<dbReference type="Bgee" id="ENSRNOG00000022792">
    <property type="expression patterns" value="Expressed in lung and 7 other cell types or tissues"/>
</dbReference>
<dbReference type="GO" id="GO:0097233">
    <property type="term" value="C:alveolar lamellar body membrane"/>
    <property type="evidence" value="ECO:0000314"/>
    <property type="project" value="ParkinsonsUK-UCL"/>
</dbReference>
<dbReference type="GO" id="GO:0009986">
    <property type="term" value="C:cell surface"/>
    <property type="evidence" value="ECO:0007669"/>
    <property type="project" value="UniProtKB-SubCell"/>
</dbReference>
<dbReference type="GO" id="GO:0005769">
    <property type="term" value="C:early endosome"/>
    <property type="evidence" value="ECO:0000266"/>
    <property type="project" value="RGD"/>
</dbReference>
<dbReference type="GO" id="GO:0031901">
    <property type="term" value="C:early endosome membrane"/>
    <property type="evidence" value="ECO:0007669"/>
    <property type="project" value="UniProtKB-SubCell"/>
</dbReference>
<dbReference type="GO" id="GO:0031902">
    <property type="term" value="C:late endosome membrane"/>
    <property type="evidence" value="ECO:0000318"/>
    <property type="project" value="GO_Central"/>
</dbReference>
<dbReference type="GO" id="GO:0005765">
    <property type="term" value="C:lysosomal membrane"/>
    <property type="evidence" value="ECO:0000266"/>
    <property type="project" value="RGD"/>
</dbReference>
<dbReference type="GO" id="GO:0048471">
    <property type="term" value="C:perinuclear region of cytoplasm"/>
    <property type="evidence" value="ECO:0000266"/>
    <property type="project" value="RGD"/>
</dbReference>
<dbReference type="GO" id="GO:0005886">
    <property type="term" value="C:plasma membrane"/>
    <property type="evidence" value="ECO:0000266"/>
    <property type="project" value="RGD"/>
</dbReference>
<dbReference type="GO" id="GO:0031982">
    <property type="term" value="C:vesicle"/>
    <property type="evidence" value="ECO:0000266"/>
    <property type="project" value="RGD"/>
</dbReference>
<dbReference type="GO" id="GO:0002250">
    <property type="term" value="P:adaptive immune response"/>
    <property type="evidence" value="ECO:0007669"/>
    <property type="project" value="UniProtKB-KW"/>
</dbReference>
<dbReference type="GO" id="GO:0072594">
    <property type="term" value="P:establishment of protein localization to organelle"/>
    <property type="evidence" value="ECO:0000318"/>
    <property type="project" value="GO_Central"/>
</dbReference>
<dbReference type="GO" id="GO:0006629">
    <property type="term" value="P:lipid metabolic process"/>
    <property type="evidence" value="ECO:0007669"/>
    <property type="project" value="Ensembl"/>
</dbReference>
<dbReference type="GO" id="GO:1901799">
    <property type="term" value="P:negative regulation of proteasomal protein catabolic process"/>
    <property type="evidence" value="ECO:0000266"/>
    <property type="project" value="RGD"/>
</dbReference>
<dbReference type="GO" id="GO:0010628">
    <property type="term" value="P:positive regulation of gene expression"/>
    <property type="evidence" value="ECO:0000266"/>
    <property type="project" value="RGD"/>
</dbReference>
<dbReference type="GO" id="GO:0010506">
    <property type="term" value="P:regulation of autophagy"/>
    <property type="evidence" value="ECO:0000266"/>
    <property type="project" value="RGD"/>
</dbReference>
<dbReference type="GO" id="GO:1903900">
    <property type="term" value="P:regulation of viral life cycle"/>
    <property type="evidence" value="ECO:0000266"/>
    <property type="project" value="RGD"/>
</dbReference>
<dbReference type="GO" id="GO:0035455">
    <property type="term" value="P:response to interferon-alpha"/>
    <property type="evidence" value="ECO:0000266"/>
    <property type="project" value="RGD"/>
</dbReference>
<dbReference type="GO" id="GO:0043129">
    <property type="term" value="P:surfactant homeostasis"/>
    <property type="evidence" value="ECO:0007669"/>
    <property type="project" value="Ensembl"/>
</dbReference>
<dbReference type="FunFam" id="2.40.160.110:FF:000006">
    <property type="entry name" value="Lysosome-associated membrane glycoprotein 3"/>
    <property type="match status" value="1"/>
</dbReference>
<dbReference type="Gene3D" id="2.40.160.110">
    <property type="match status" value="1"/>
</dbReference>
<dbReference type="InterPro" id="IPR048528">
    <property type="entry name" value="Lamp2-like_luminal"/>
</dbReference>
<dbReference type="InterPro" id="IPR002000">
    <property type="entry name" value="Lysosome-assoc_membr_glycop"/>
</dbReference>
<dbReference type="PANTHER" id="PTHR11506">
    <property type="entry name" value="LYSOSOME-ASSOCIATED MEMBRANE GLYCOPROTEIN"/>
    <property type="match status" value="1"/>
</dbReference>
<dbReference type="PANTHER" id="PTHR11506:SF30">
    <property type="entry name" value="LYSOSOME-ASSOCIATED MEMBRANE GLYCOPROTEIN 3"/>
    <property type="match status" value="1"/>
</dbReference>
<dbReference type="Pfam" id="PF01299">
    <property type="entry name" value="Lamp2-like_luminal"/>
    <property type="match status" value="1"/>
</dbReference>
<dbReference type="PRINTS" id="PR00336">
    <property type="entry name" value="LYSASSOCTDMP"/>
</dbReference>
<dbReference type="PROSITE" id="PS51407">
    <property type="entry name" value="LAMP_3"/>
    <property type="match status" value="1"/>
</dbReference>
<proteinExistence type="evidence at transcript level"/>
<keyword id="KW-1064">Adaptive immunity</keyword>
<keyword id="KW-0968">Cytoplasmic vesicle</keyword>
<keyword id="KW-1015">Disulfide bond</keyword>
<keyword id="KW-0967">Endosome</keyword>
<keyword id="KW-0325">Glycoprotein</keyword>
<keyword id="KW-0391">Immunity</keyword>
<keyword id="KW-0458">Lysosome</keyword>
<keyword id="KW-0472">Membrane</keyword>
<keyword id="KW-1185">Reference proteome</keyword>
<keyword id="KW-0732">Signal</keyword>
<keyword id="KW-0812">Transmembrane</keyword>
<keyword id="KW-1133">Transmembrane helix</keyword>
<name>LAMP3_RAT</name>
<accession>Q5XI99</accession>
<comment type="function">
    <text evidence="2">Lysosomal membrane glycoprotein which plays a role in the unfolded protein response (UPR) that contributes to protein degradation and cell survival during proteasomal dysfunction. Plays a role in the process of fusion of the lysosome with the autophagosome, thereby modulating the autophagic process. Promotes hepatocellular lipogenesis through activation of the PI3K/Akt pathway. May also play a role in dendritic cell function and in adaptive immunity.</text>
</comment>
<comment type="subunit">
    <text evidence="1">Monomer. Interacts with FURIN.</text>
</comment>
<comment type="subcellular location">
    <subcellularLocation>
        <location evidence="2">Cell surface</location>
    </subcellularLocation>
    <subcellularLocation>
        <location evidence="2">Lysosome membrane</location>
        <topology evidence="3">Single-pass type I membrane protein</topology>
    </subcellularLocation>
    <subcellularLocation>
        <location evidence="2">Cytoplasmic vesicle membrane</location>
        <topology evidence="3">Single-pass type I membrane protein</topology>
    </subcellularLocation>
    <subcellularLocation>
        <location evidence="2">Early endosome membrane</location>
        <topology evidence="3">Single-pass type I membrane protein</topology>
    </subcellularLocation>
    <text evidence="2">During dendritic cell maturation, detected on cytoplasmic vesicles (the MHC II compartment) that contain MHC II proteins, LAMP1, LAMP2 and LAMP3. Detected on lysosomes in mature dendritic cells.</text>
</comment>
<comment type="similarity">
    <text evidence="4">Belongs to the LAMP family.</text>
</comment>
<organism>
    <name type="scientific">Rattus norvegicus</name>
    <name type="common">Rat</name>
    <dbReference type="NCBI Taxonomy" id="10116"/>
    <lineage>
        <taxon>Eukaryota</taxon>
        <taxon>Metazoa</taxon>
        <taxon>Chordata</taxon>
        <taxon>Craniata</taxon>
        <taxon>Vertebrata</taxon>
        <taxon>Euteleostomi</taxon>
        <taxon>Mammalia</taxon>
        <taxon>Eutheria</taxon>
        <taxon>Euarchontoglires</taxon>
        <taxon>Glires</taxon>
        <taxon>Rodentia</taxon>
        <taxon>Myomorpha</taxon>
        <taxon>Muroidea</taxon>
        <taxon>Muridae</taxon>
        <taxon>Murinae</taxon>
        <taxon>Rattus</taxon>
    </lineage>
</organism>
<protein>
    <recommendedName>
        <fullName>Lysosome-associated membrane glycoprotein 3</fullName>
        <shortName>LAMP-3</shortName>
        <shortName>Lysosomal-associated membrane protein 3</shortName>
    </recommendedName>
    <cdAntigenName>CD208</cdAntigenName>
</protein>
<reference key="1">
    <citation type="journal article" date="2004" name="Genome Res.">
        <title>The status, quality, and expansion of the NIH full-length cDNA project: the Mammalian Gene Collection (MGC).</title>
        <authorList>
            <consortium name="The MGC Project Team"/>
        </authorList>
    </citation>
    <scope>NUCLEOTIDE SEQUENCE [LARGE SCALE MRNA]</scope>
    <source>
        <tissue>Lung</tissue>
    </source>
</reference>